<name>YT68_CAEEL</name>
<feature type="chain" id="PRO_0000065094" description="Uncharacterized protein B0563.8">
    <location>
        <begin position="1"/>
        <end position="85"/>
    </location>
</feature>
<sequence>MSKDCKMVSELCEKVSKIMTVVKELRAEHRREFVQKPEEIEMDVFWRQTFVRFTEPAEKWSNIRHRPAPATTPIDIVYPLREQDW</sequence>
<dbReference type="EMBL" id="FO080238">
    <property type="protein sequence ID" value="CCD62261.1"/>
    <property type="molecule type" value="Genomic_DNA"/>
</dbReference>
<dbReference type="PIR" id="T15363">
    <property type="entry name" value="T15363"/>
</dbReference>
<dbReference type="RefSeq" id="NP_509548.2">
    <property type="nucleotide sequence ID" value="NM_077147.3"/>
</dbReference>
<dbReference type="SMR" id="Q11084"/>
<dbReference type="FunCoup" id="Q11084">
    <property type="interactions" value="1522"/>
</dbReference>
<dbReference type="PaxDb" id="6239-B0563.8"/>
<dbReference type="EnsemblMetazoa" id="B0563.8.1">
    <property type="protein sequence ID" value="B0563.8.1"/>
    <property type="gene ID" value="WBGene00015265"/>
</dbReference>
<dbReference type="GeneID" id="182042"/>
<dbReference type="KEGG" id="cel:CELE_B0563.8"/>
<dbReference type="UCSC" id="B0563.8">
    <property type="organism name" value="c. elegans"/>
</dbReference>
<dbReference type="AGR" id="WB:WBGene00015265"/>
<dbReference type="CTD" id="182042"/>
<dbReference type="WormBase" id="B0563.8">
    <property type="protein sequence ID" value="CE39467"/>
    <property type="gene ID" value="WBGene00015265"/>
</dbReference>
<dbReference type="eggNOG" id="ENOG502R9BQ">
    <property type="taxonomic scope" value="Eukaryota"/>
</dbReference>
<dbReference type="HOGENOM" id="CLU_2514695_0_0_1"/>
<dbReference type="InParanoid" id="Q11084"/>
<dbReference type="OMA" id="IEMEVFW"/>
<dbReference type="OrthoDB" id="5856547at2759"/>
<dbReference type="PRO" id="PR:Q11084"/>
<dbReference type="Proteomes" id="UP000001940">
    <property type="component" value="Chromosome X"/>
</dbReference>
<dbReference type="Bgee" id="WBGene00015265">
    <property type="expression patterns" value="Expressed in embryo and 2 other cell types or tissues"/>
</dbReference>
<reference key="1">
    <citation type="journal article" date="1998" name="Science">
        <title>Genome sequence of the nematode C. elegans: a platform for investigating biology.</title>
        <authorList>
            <consortium name="The C. elegans sequencing consortium"/>
        </authorList>
    </citation>
    <scope>NUCLEOTIDE SEQUENCE [LARGE SCALE GENOMIC DNA]</scope>
    <source>
        <strain>Bristol N2</strain>
    </source>
</reference>
<protein>
    <recommendedName>
        <fullName>Uncharacterized protein B0563.8</fullName>
    </recommendedName>
</protein>
<proteinExistence type="predicted"/>
<gene>
    <name type="ORF">B0563.8</name>
</gene>
<keyword id="KW-1185">Reference proteome</keyword>
<accession>Q11084</accession>
<organism>
    <name type="scientific">Caenorhabditis elegans</name>
    <dbReference type="NCBI Taxonomy" id="6239"/>
    <lineage>
        <taxon>Eukaryota</taxon>
        <taxon>Metazoa</taxon>
        <taxon>Ecdysozoa</taxon>
        <taxon>Nematoda</taxon>
        <taxon>Chromadorea</taxon>
        <taxon>Rhabditida</taxon>
        <taxon>Rhabditina</taxon>
        <taxon>Rhabditomorpha</taxon>
        <taxon>Rhabditoidea</taxon>
        <taxon>Rhabditidae</taxon>
        <taxon>Peloderinae</taxon>
        <taxon>Caenorhabditis</taxon>
    </lineage>
</organism>